<organism>
    <name type="scientific">Colletotrichum graminicola (strain M1.001 / M2 / FGSC 10212)</name>
    <name type="common">Maize anthracnose fungus</name>
    <name type="synonym">Glomerella graminicola</name>
    <dbReference type="NCBI Taxonomy" id="645133"/>
    <lineage>
        <taxon>Eukaryota</taxon>
        <taxon>Fungi</taxon>
        <taxon>Dikarya</taxon>
        <taxon>Ascomycota</taxon>
        <taxon>Pezizomycotina</taxon>
        <taxon>Sordariomycetes</taxon>
        <taxon>Hypocreomycetidae</taxon>
        <taxon>Glomerellales</taxon>
        <taxon>Glomerellaceae</taxon>
        <taxon>Colletotrichum</taxon>
        <taxon>Colletotrichum graminicola species complex</taxon>
    </lineage>
</organism>
<sequence>METVVDHHVIEVDEFDALFIEVKTEAAPVESVVSVAPIPARFPAKLHARKIAAELNASDGLVFLPGEPSRSYEDSDMGPAFRQRRYFYYLSGANFADCAVTYELASDRLILWVPYVEPRQVLWFGSTPGISECLKQFDVDDVRYTTQLNKFLYRHLTPGSTLYVIHADQVPLHGDFLQSAAEVRIDVTSLQPAMDQARVVKTDYEVAMIRKAAAVSALAHRRVAEKLLRLENESEIEAVYQAWCTTSGAREQAYAIIAGSGKNASTLHYDANNEPLEGREVVVFDAGCEWHCYASDITRTLPISGKFSAEAKAVYDVVAKMQDECISFIRPGTLFFDLHIHASRVAQQGLLKLGVLKGDPAEVWDAGTVAAFFPHGLGHHVGLEVHDVSGRERLLLLNNVMGAQGGRVGKREVVTPEMLGAMVQASAPGAAAAAAPPPYKGRQYLRKNMIVTVEPGIYFCREYIEGYFLSNPRHARFINKTVLERYYRVGGVRIEDDILVTDDGYENLSTGAPKGEELLRVINGKA</sequence>
<reference key="1">
    <citation type="journal article" date="2012" name="Nat. Genet.">
        <title>Lifestyle transitions in plant pathogenic Colletotrichum fungi deciphered by genome and transcriptome analyses.</title>
        <authorList>
            <person name="O'Connell R.J."/>
            <person name="Thon M.R."/>
            <person name="Hacquard S."/>
            <person name="Amyotte S.G."/>
            <person name="Kleemann J."/>
            <person name="Torres M.F."/>
            <person name="Damm U."/>
            <person name="Buiate E.A."/>
            <person name="Epstein L."/>
            <person name="Alkan N."/>
            <person name="Altmueller J."/>
            <person name="Alvarado-Balderrama L."/>
            <person name="Bauser C.A."/>
            <person name="Becker C."/>
            <person name="Birren B.W."/>
            <person name="Chen Z."/>
            <person name="Choi J."/>
            <person name="Crouch J.A."/>
            <person name="Duvick J.P."/>
            <person name="Farman M.A."/>
            <person name="Gan P."/>
            <person name="Heiman D."/>
            <person name="Henrissat B."/>
            <person name="Howard R.J."/>
            <person name="Kabbage M."/>
            <person name="Koch C."/>
            <person name="Kracher B."/>
            <person name="Kubo Y."/>
            <person name="Law A.D."/>
            <person name="Lebrun M.-H."/>
            <person name="Lee Y.-H."/>
            <person name="Miyara I."/>
            <person name="Moore N."/>
            <person name="Neumann U."/>
            <person name="Nordstroem K."/>
            <person name="Panaccione D.G."/>
            <person name="Panstruga R."/>
            <person name="Place M."/>
            <person name="Proctor R.H."/>
            <person name="Prusky D."/>
            <person name="Rech G."/>
            <person name="Reinhardt R."/>
            <person name="Rollins J.A."/>
            <person name="Rounsley S."/>
            <person name="Schardl C.L."/>
            <person name="Schwartz D.C."/>
            <person name="Shenoy N."/>
            <person name="Shirasu K."/>
            <person name="Sikhakolli U.R."/>
            <person name="Stueber K."/>
            <person name="Sukno S.A."/>
            <person name="Sweigard J.A."/>
            <person name="Takano Y."/>
            <person name="Takahara H."/>
            <person name="Trail F."/>
            <person name="van der Does H.C."/>
            <person name="Voll L.M."/>
            <person name="Will I."/>
            <person name="Young S."/>
            <person name="Zeng Q."/>
            <person name="Zhang J."/>
            <person name="Zhou S."/>
            <person name="Dickman M.B."/>
            <person name="Schulze-Lefert P."/>
            <person name="Ver Loren van Themaat E."/>
            <person name="Ma L.-J."/>
            <person name="Vaillancourt L.J."/>
        </authorList>
    </citation>
    <scope>NUCLEOTIDE SEQUENCE [LARGE SCALE GENOMIC DNA]</scope>
    <source>
        <strain>M1.001 / M2 / FGSC 10212</strain>
    </source>
</reference>
<keyword id="KW-0031">Aminopeptidase</keyword>
<keyword id="KW-0378">Hydrolase</keyword>
<keyword id="KW-0464">Manganese</keyword>
<keyword id="KW-0479">Metal-binding</keyword>
<keyword id="KW-0482">Metalloprotease</keyword>
<keyword id="KW-0645">Protease</keyword>
<keyword id="KW-1185">Reference proteome</keyword>
<comment type="function">
    <text evidence="1">Catalyzes the removal of a penultimate prolyl residue from the N-termini of peptides.</text>
</comment>
<comment type="catalytic activity">
    <reaction>
        <text>Release of any N-terminal amino acid, including proline, that is linked to proline, even from a dipeptide or tripeptide.</text>
        <dbReference type="EC" id="3.4.11.9"/>
    </reaction>
</comment>
<comment type="cofactor">
    <cofactor evidence="1">
        <name>Mn(2+)</name>
        <dbReference type="ChEBI" id="CHEBI:29035"/>
    </cofactor>
    <text evidence="1">Binds 2 manganese ions per subunit.</text>
</comment>
<comment type="similarity">
    <text evidence="2">Belongs to the peptidase M24B family.</text>
</comment>
<name>AMPP2_COLGM</name>
<gene>
    <name type="ORF">GLRG_02280</name>
</gene>
<feature type="chain" id="PRO_0000411834" description="Probable Xaa-Pro aminopeptidase GLRG_02280">
    <location>
        <begin position="1"/>
        <end position="526"/>
    </location>
</feature>
<feature type="binding site" evidence="1">
    <location>
        <position position="285"/>
    </location>
    <ligand>
        <name>Mn(2+)</name>
        <dbReference type="ChEBI" id="CHEBI:29035"/>
        <label>2</label>
    </ligand>
</feature>
<feature type="binding site" evidence="1">
    <location>
        <position position="296"/>
    </location>
    <ligand>
        <name>Mn(2+)</name>
        <dbReference type="ChEBI" id="CHEBI:29035"/>
        <label>1</label>
    </ligand>
</feature>
<feature type="binding site" evidence="1">
    <location>
        <position position="296"/>
    </location>
    <ligand>
        <name>Mn(2+)</name>
        <dbReference type="ChEBI" id="CHEBI:29035"/>
        <label>2</label>
    </ligand>
</feature>
<feature type="binding site" evidence="1">
    <location>
        <position position="454"/>
    </location>
    <ligand>
        <name>Mn(2+)</name>
        <dbReference type="ChEBI" id="CHEBI:29035"/>
        <label>1</label>
    </ligand>
</feature>
<feature type="binding site" evidence="1">
    <location>
        <position position="495"/>
    </location>
    <ligand>
        <name>Mn(2+)</name>
        <dbReference type="ChEBI" id="CHEBI:29035"/>
        <label>1</label>
    </ligand>
</feature>
<feature type="binding site" evidence="1">
    <location>
        <position position="495"/>
    </location>
    <ligand>
        <name>Mn(2+)</name>
        <dbReference type="ChEBI" id="CHEBI:29035"/>
        <label>2</label>
    </ligand>
</feature>
<protein>
    <recommendedName>
        <fullName>Probable Xaa-Pro aminopeptidase GLRG_02280</fullName>
        <ecNumber>3.4.11.9</ecNumber>
    </recommendedName>
    <alternativeName>
        <fullName>Aminoacylproline aminopeptidase</fullName>
    </alternativeName>
    <alternativeName>
        <fullName>Prolidase</fullName>
    </alternativeName>
</protein>
<accession>E3Q897</accession>
<dbReference type="EC" id="3.4.11.9"/>
<dbReference type="EMBL" id="GG697336">
    <property type="protein sequence ID" value="EFQ27109.1"/>
    <property type="molecule type" value="Genomic_DNA"/>
</dbReference>
<dbReference type="RefSeq" id="XP_008091129.1">
    <property type="nucleotide sequence ID" value="XM_008092938.1"/>
</dbReference>
<dbReference type="SMR" id="E3Q897"/>
<dbReference type="STRING" id="645133.E3Q897"/>
<dbReference type="EnsemblFungi" id="EFQ27109">
    <property type="protein sequence ID" value="EFQ27109"/>
    <property type="gene ID" value="GLRG_02280"/>
</dbReference>
<dbReference type="GeneID" id="24407645"/>
<dbReference type="VEuPathDB" id="FungiDB:GLRG_02280"/>
<dbReference type="eggNOG" id="KOG2737">
    <property type="taxonomic scope" value="Eukaryota"/>
</dbReference>
<dbReference type="HOGENOM" id="CLU_017266_1_2_1"/>
<dbReference type="OrthoDB" id="10261878at2759"/>
<dbReference type="Proteomes" id="UP000008782">
    <property type="component" value="Unassembled WGS sequence"/>
</dbReference>
<dbReference type="GO" id="GO:0030145">
    <property type="term" value="F:manganese ion binding"/>
    <property type="evidence" value="ECO:0007669"/>
    <property type="project" value="InterPro"/>
</dbReference>
<dbReference type="GO" id="GO:0070006">
    <property type="term" value="F:metalloaminopeptidase activity"/>
    <property type="evidence" value="ECO:0007669"/>
    <property type="project" value="InterPro"/>
</dbReference>
<dbReference type="GO" id="GO:0006508">
    <property type="term" value="P:proteolysis"/>
    <property type="evidence" value="ECO:0007669"/>
    <property type="project" value="UniProtKB-KW"/>
</dbReference>
<dbReference type="CDD" id="cd01087">
    <property type="entry name" value="Prolidase"/>
    <property type="match status" value="1"/>
</dbReference>
<dbReference type="Gene3D" id="3.90.230.10">
    <property type="entry name" value="Creatinase/methionine aminopeptidase superfamily"/>
    <property type="match status" value="1"/>
</dbReference>
<dbReference type="Gene3D" id="3.40.350.10">
    <property type="entry name" value="Creatinase/prolidase N-terminal domain"/>
    <property type="match status" value="1"/>
</dbReference>
<dbReference type="InterPro" id="IPR007865">
    <property type="entry name" value="Aminopep_P_N"/>
</dbReference>
<dbReference type="InterPro" id="IPR029149">
    <property type="entry name" value="Creatin/AminoP/Spt16_N"/>
</dbReference>
<dbReference type="InterPro" id="IPR036005">
    <property type="entry name" value="Creatinase/aminopeptidase-like"/>
</dbReference>
<dbReference type="InterPro" id="IPR000994">
    <property type="entry name" value="Pept_M24"/>
</dbReference>
<dbReference type="InterPro" id="IPR001131">
    <property type="entry name" value="Peptidase_M24B_aminopep-P_CS"/>
</dbReference>
<dbReference type="InterPro" id="IPR052433">
    <property type="entry name" value="X-Pro_dipept-like"/>
</dbReference>
<dbReference type="PANTHER" id="PTHR43226">
    <property type="entry name" value="XAA-PRO AMINOPEPTIDASE 3"/>
    <property type="match status" value="1"/>
</dbReference>
<dbReference type="PANTHER" id="PTHR43226:SF3">
    <property type="entry name" value="XAA-PRO AMINOPEPTIDASE AN0832-RELATED"/>
    <property type="match status" value="1"/>
</dbReference>
<dbReference type="Pfam" id="PF05195">
    <property type="entry name" value="AMP_N"/>
    <property type="match status" value="1"/>
</dbReference>
<dbReference type="Pfam" id="PF00557">
    <property type="entry name" value="Peptidase_M24"/>
    <property type="match status" value="1"/>
</dbReference>
<dbReference type="SMART" id="SM01011">
    <property type="entry name" value="AMP_N"/>
    <property type="match status" value="1"/>
</dbReference>
<dbReference type="SUPFAM" id="SSF55920">
    <property type="entry name" value="Creatinase/aminopeptidase"/>
    <property type="match status" value="1"/>
</dbReference>
<dbReference type="SUPFAM" id="SSF53092">
    <property type="entry name" value="Creatinase/prolidase N-terminal domain"/>
    <property type="match status" value="1"/>
</dbReference>
<dbReference type="PROSITE" id="PS00491">
    <property type="entry name" value="PROLINE_PEPTIDASE"/>
    <property type="match status" value="1"/>
</dbReference>
<proteinExistence type="inferred from homology"/>
<evidence type="ECO:0000250" key="1"/>
<evidence type="ECO:0000305" key="2"/>